<feature type="signal peptide" evidence="3">
    <location>
        <begin position="1"/>
        <end position="23"/>
    </location>
</feature>
<feature type="chain" id="PRO_0000284731" description="Collagen alpha-1(XIX) chain" evidence="3">
    <location>
        <begin position="24"/>
        <end position="1136"/>
    </location>
</feature>
<feature type="domain" description="Laminin G-like">
    <location>
        <begin position="47"/>
        <end position="231"/>
    </location>
</feature>
<feature type="domain" description="Collagen-like 1">
    <location>
        <begin position="292"/>
        <end position="346"/>
    </location>
</feature>
<feature type="domain" description="Collagen-like 2">
    <location>
        <begin position="347"/>
        <end position="388"/>
    </location>
</feature>
<feature type="domain" description="Collagen-like 3">
    <location>
        <begin position="389"/>
        <end position="430"/>
    </location>
</feature>
<feature type="domain" description="Collagen-like 4">
    <location>
        <begin position="519"/>
        <end position="577"/>
    </location>
</feature>
<feature type="domain" description="Collagen-like 5">
    <location>
        <begin position="578"/>
        <end position="618"/>
    </location>
</feature>
<feature type="domain" description="Collagen-like 6">
    <location>
        <begin position="620"/>
        <end position="673"/>
    </location>
</feature>
<feature type="domain" description="Collagen-like 7">
    <location>
        <begin position="722"/>
        <end position="777"/>
    </location>
</feature>
<feature type="domain" description="Collagen-like 8">
    <location>
        <begin position="778"/>
        <end position="810"/>
    </location>
</feature>
<feature type="domain" description="Collagen-like 9">
    <location>
        <begin position="833"/>
        <end position="891"/>
    </location>
</feature>
<feature type="region of interest" description="Disordered" evidence="4">
    <location>
        <begin position="252"/>
        <end position="272"/>
    </location>
</feature>
<feature type="region of interest" description="Disordered" evidence="4">
    <location>
        <begin position="289"/>
        <end position="673"/>
    </location>
</feature>
<feature type="region of interest" description="Triple-helical region 1 (COL1)" evidence="3">
    <location>
        <begin position="289"/>
        <end position="348"/>
    </location>
</feature>
<feature type="region of interest" description="Triple-helical region 2 (COL2)" evidence="3">
    <location>
        <begin position="367"/>
        <end position="426"/>
    </location>
</feature>
<feature type="region of interest" description="Triple-helical region 3 (COL3)" evidence="3">
    <location>
        <begin position="442"/>
        <end position="682"/>
    </location>
</feature>
<feature type="region of interest" description="Triple-helical region 4 (COL4)" evidence="3">
    <location>
        <begin position="694"/>
        <end position="812"/>
    </location>
</feature>
<feature type="region of interest" description="Disordered" evidence="4">
    <location>
        <begin position="699"/>
        <end position="1005"/>
    </location>
</feature>
<feature type="region of interest" description="Triple-helical region 5 (COL5)" evidence="3">
    <location>
        <begin position="827"/>
        <end position="1006"/>
    </location>
</feature>
<feature type="region of interest" description="Disordered" evidence="4">
    <location>
        <begin position="1043"/>
        <end position="1136"/>
    </location>
</feature>
<feature type="region of interest" description="Triple-helical region 6 (COL6)" evidence="3">
    <location>
        <begin position="1048"/>
        <end position="1105"/>
    </location>
</feature>
<feature type="short sequence motif" description="Cell attachment site" evidence="3">
    <location>
        <begin position="946"/>
        <end position="948"/>
    </location>
</feature>
<feature type="compositionally biased region" description="Low complexity" evidence="4">
    <location>
        <begin position="254"/>
        <end position="266"/>
    </location>
</feature>
<feature type="compositionally biased region" description="Basic and acidic residues" evidence="4">
    <location>
        <begin position="302"/>
        <end position="314"/>
    </location>
</feature>
<feature type="compositionally biased region" description="Basic and acidic residues" evidence="4">
    <location>
        <begin position="332"/>
        <end position="344"/>
    </location>
</feature>
<feature type="compositionally biased region" description="Low complexity" evidence="4">
    <location>
        <begin position="387"/>
        <end position="401"/>
    </location>
</feature>
<feature type="compositionally biased region" description="Pro residues" evidence="4">
    <location>
        <begin position="414"/>
        <end position="426"/>
    </location>
</feature>
<feature type="compositionally biased region" description="Low complexity" evidence="4">
    <location>
        <begin position="428"/>
        <end position="437"/>
    </location>
</feature>
<feature type="compositionally biased region" description="Basic and acidic residues" evidence="4">
    <location>
        <begin position="472"/>
        <end position="490"/>
    </location>
</feature>
<feature type="compositionally biased region" description="Low complexity" evidence="4">
    <location>
        <begin position="511"/>
        <end position="523"/>
    </location>
</feature>
<feature type="compositionally biased region" description="Low complexity" evidence="4">
    <location>
        <begin position="567"/>
        <end position="577"/>
    </location>
</feature>
<feature type="compositionally biased region" description="Low complexity" evidence="4">
    <location>
        <begin position="634"/>
        <end position="645"/>
    </location>
</feature>
<feature type="compositionally biased region" description="Basic and acidic residues" evidence="4">
    <location>
        <begin position="714"/>
        <end position="725"/>
    </location>
</feature>
<feature type="compositionally biased region" description="Basic and acidic residues" evidence="4">
    <location>
        <begin position="737"/>
        <end position="758"/>
    </location>
</feature>
<feature type="compositionally biased region" description="Low complexity" evidence="4">
    <location>
        <begin position="764"/>
        <end position="788"/>
    </location>
</feature>
<feature type="compositionally biased region" description="Pro residues" evidence="4">
    <location>
        <begin position="800"/>
        <end position="811"/>
    </location>
</feature>
<feature type="compositionally biased region" description="Pro residues" evidence="4">
    <location>
        <begin position="834"/>
        <end position="846"/>
    </location>
</feature>
<feature type="compositionally biased region" description="Low complexity" evidence="4">
    <location>
        <begin position="877"/>
        <end position="886"/>
    </location>
</feature>
<feature type="compositionally biased region" description="Basic and acidic residues" evidence="4">
    <location>
        <begin position="937"/>
        <end position="948"/>
    </location>
</feature>
<feature type="compositionally biased region" description="Low complexity" evidence="4">
    <location>
        <begin position="1087"/>
        <end position="1101"/>
    </location>
</feature>
<feature type="compositionally biased region" description="Pro residues" evidence="4">
    <location>
        <begin position="1102"/>
        <end position="1113"/>
    </location>
</feature>
<feature type="glycosylation site" description="N-linked (GlcNAc...) asparagine" evidence="3">
    <location>
        <position position="47"/>
    </location>
</feature>
<feature type="sequence conflict" description="In Ref. 1; BAA23578." evidence="8" ref="1">
    <original>K</original>
    <variation>Q</variation>
    <location>
        <position position="110"/>
    </location>
</feature>
<feature type="sequence conflict" description="In Ref. 1; BAA23578 and 3; AAI18971." evidence="8" ref="1 3">
    <original>D</original>
    <variation>N</variation>
    <location>
        <position position="315"/>
    </location>
</feature>
<feature type="sequence conflict" description="In Ref. 1; BAA23578." evidence="8" ref="1">
    <original>G</original>
    <variation>K</variation>
    <location>
        <position position="528"/>
    </location>
</feature>
<feature type="sequence conflict" description="In Ref. 1; BAA23578." evidence="8" ref="1">
    <original>G</original>
    <variation>E</variation>
    <location>
        <position position="597"/>
    </location>
</feature>
<feature type="sequence conflict" description="In Ref. 1; BAA23578 and 3; AAI18971." evidence="8" ref="1 3">
    <original>D</original>
    <variation>E</variation>
    <location>
        <position position="717"/>
    </location>
</feature>
<keyword id="KW-0130">Cell adhesion</keyword>
<keyword id="KW-0176">Collagen</keyword>
<keyword id="KW-0217">Developmental protein</keyword>
<keyword id="KW-0221">Differentiation</keyword>
<keyword id="KW-1015">Disulfide bond</keyword>
<keyword id="KW-0272">Extracellular matrix</keyword>
<keyword id="KW-0325">Glycoprotein</keyword>
<keyword id="KW-0379">Hydroxylation</keyword>
<keyword id="KW-0517">Myogenesis</keyword>
<keyword id="KW-1185">Reference proteome</keyword>
<keyword id="KW-0677">Repeat</keyword>
<keyword id="KW-0964">Secreted</keyword>
<keyword id="KW-0732">Signal</keyword>
<proteinExistence type="evidence at transcript level"/>
<organism>
    <name type="scientific">Mus musculus</name>
    <name type="common">Mouse</name>
    <dbReference type="NCBI Taxonomy" id="10090"/>
    <lineage>
        <taxon>Eukaryota</taxon>
        <taxon>Metazoa</taxon>
        <taxon>Chordata</taxon>
        <taxon>Craniata</taxon>
        <taxon>Vertebrata</taxon>
        <taxon>Euteleostomi</taxon>
        <taxon>Mammalia</taxon>
        <taxon>Eutheria</taxon>
        <taxon>Euarchontoglires</taxon>
        <taxon>Glires</taxon>
        <taxon>Rodentia</taxon>
        <taxon>Myomorpha</taxon>
        <taxon>Muroidea</taxon>
        <taxon>Muridae</taxon>
        <taxon>Murinae</taxon>
        <taxon>Mus</taxon>
        <taxon>Mus</taxon>
    </lineage>
</organism>
<name>COJA1_MOUSE</name>
<comment type="function">
    <text evidence="6 8">May act as a cross-bridge between fibrils and other extracellular matrix molecules. Involved in skeletal myogenesis in the developing esophagus. May play a role in organization of the pericellular matrix or the sphinteric smooth muscle.</text>
</comment>
<comment type="subunit">
    <text evidence="2">Oligomer; disulfide-linked.</text>
</comment>
<comment type="subcellular location">
    <subcellularLocation>
        <location evidence="1">Secreted</location>
        <location evidence="1">Extracellular space</location>
        <location evidence="1">Extracellular matrix</location>
    </subcellularLocation>
</comment>
<comment type="developmental stage">
    <text evidence="5 7">Expressed in the myotome of somites from 9.5 dpc. In muscular tissues, expression is transient and is confined to a few sites of the developing embryo, such as limbs, tongue, and smooth muscle layers of stomach and esophagus. Also detected in skin at 16.5 dpc and in cerebral cortex and hippocampus of the newborn brain. In adult, expression is only observed in cerebrum, cerebellum, eyes, and testis. In CNS, expression gradually increases following birth. Also expressed in embryonic fibroblasts and to a lesser extent in adult fibroblasts.</text>
</comment>
<comment type="domain">
    <text evidence="2">The numerous interruptions in the triple helix may make this molecule either elastic or flexible.</text>
</comment>
<comment type="PTM">
    <text evidence="8">Prolines at the third position of the tripeptide repeating unit (G-X-Y) are hydroxylated in some or all of the chains.</text>
</comment>
<comment type="disruption phenotype">
    <text evidence="6">Mice show severe signs of malnourishment and the majority die within the first three weeks of postnatal life. Newborn homozygotes do not show gross anatomical abnormalities, except for smaller size of the internal organs. However, necroscopy of the mice that survive past the weaning stage reveals a dilated esophagus (megaesophagus) with retention of ingesta immediately above the diaphragm level. Mutant mice also exhibit an additional defect, namely impaired smooth-to-skeletal muscle cell transdifferentiation in the abdominal segment of the esophagus. Heterozygotes by comparison are morphologically normal, viable and fertile.</text>
</comment>
<comment type="similarity">
    <text evidence="3">Belongs to the fibril-associated collagens with interrupted helices (FACIT) family.</text>
</comment>
<sequence>MRHTGSWKLWTWVTTFLLPACTCLTVRDKPETTCPTLRTERYQDDRNKSELSGFDLGESFALRHAFCEGDKTCFKLGSVLLIRDTVKIFPKGLPEEYAIAVMFRVRRSTKKERWFLWKILNQQNMAQISVVIDGTKKVVEFMFRGAEGDLLNYVFKNRELRPLFDRQWHKLGIGVQSRVLSLYMDCNLIASRHTEEKNSVDFQGRTIIAARASDGKPVDIELHQLRIYCNANFLAEESCCNLSPTKCPEQDDFGSTTSSWGTSNTGKMSSYLPGKQELKDTCQCIPNKEEAGLPGTLRSIGHKGDKGEPGEHGLDGTPGLPGQKGEQGLEGIKGEIGEKGEPGAKGDSGLDGLNGQDGLKGDSGPQGPPGPKGDKGDMGPPGPPALTGSIGIQGPQGPPGKEGQRGRRGKTGPPGNPGPPGPPGPPGLQGLQQPFGGYFNKGTGEHGASGPKGEKGDTGLPGFPGSVGPKGHKGEPGEPLTKGEKGDRGEPGLLGPQGIKGEPGDPGPPGLLGSPGLKGQQGPAGSMGPRGPPGDVGLPGEHGIPGKQGVKGEKGDPGGRLGPPGLPGLKGDAGPPGISLPGKPGLDGNPGSPGPRGPKGERGLPGLHGSPGDTGPPGVGIPGRTGSQGPAGEPGIQGPRGLPGLPGTPGMPGNDGAPGKDGKPGLPGPPGDPIALPLLGDIGALLKNFCGNCQANVPGLKSIKGDDGSTGEPGKYDPAARKGDVGPRGPPGFPGREGPKGSKGERGYPGIHGEKGDEGLQGIPGLSGAPGPTGPPGLTGRTGHPGPTGAKGDKGSEGPPGKPGPPGPPGVPLNEGNGMSSLYKIQGGVNVPGYPGPPGPPGPKGDPGPVGEPGAMGLPGLEGFPGVKGDRGPAGPPGIAGISGKPGAPGPPGVPGEQGERGPIGDTGFPGPEGPSGKPGINGKDGLPGAQGIMGKPGDRGPKGERGDQGIPGDRGPQGERGKPGLTGMKGAIGPVGPAGSKGSTGPPGHQGPPGNPGIPGTPADAVSFEEIKHYINQEVLRIFEERMAVFLSQLKLPAAMLSAQAHGRPGPPGKDGLPGPPGDPGPQGYRGQKGERGEPGIGLPGSPGLPGSSAVGLPGSPGAPGPQGPPGPSGRCNPEDCLYPAPPPHQQAGGK</sequence>
<gene>
    <name evidence="11" type="primary">Col19a1</name>
</gene>
<reference evidence="8 10" key="1">
    <citation type="journal article" date="1997" name="J. Biol. Chem.">
        <title>Ubiquitous expression of the alpha1(XIX) collagen gene (Col19a1) during mouse embryogenesis becomes restricted to a few tissues in the adult organism.</title>
        <authorList>
            <person name="Sumiyoshi H."/>
            <person name="Inoguchi K."/>
            <person name="Khaleduzzaman M."/>
            <person name="Ninomiya Y."/>
            <person name="Yoshioka H."/>
        </authorList>
    </citation>
    <scope>NUCLEOTIDE SEQUENCE [MRNA]</scope>
    <scope>DEVELOPMENTAL STAGE</scope>
    <source>
        <strain evidence="10">BALB/cJ</strain>
    </source>
</reference>
<reference key="2">
    <citation type="journal article" date="2009" name="PLoS Biol.">
        <title>Lineage-specific biology revealed by a finished genome assembly of the mouse.</title>
        <authorList>
            <person name="Church D.M."/>
            <person name="Goodstadt L."/>
            <person name="Hillier L.W."/>
            <person name="Zody M.C."/>
            <person name="Goldstein S."/>
            <person name="She X."/>
            <person name="Bult C.J."/>
            <person name="Agarwala R."/>
            <person name="Cherry J.L."/>
            <person name="DiCuccio M."/>
            <person name="Hlavina W."/>
            <person name="Kapustin Y."/>
            <person name="Meric P."/>
            <person name="Maglott D."/>
            <person name="Birtle Z."/>
            <person name="Marques A.C."/>
            <person name="Graves T."/>
            <person name="Zhou S."/>
            <person name="Teague B."/>
            <person name="Potamousis K."/>
            <person name="Churas C."/>
            <person name="Place M."/>
            <person name="Herschleb J."/>
            <person name="Runnheim R."/>
            <person name="Forrest D."/>
            <person name="Amos-Landgraf J."/>
            <person name="Schwartz D.C."/>
            <person name="Cheng Z."/>
            <person name="Lindblad-Toh K."/>
            <person name="Eichler E.E."/>
            <person name="Ponting C.P."/>
        </authorList>
    </citation>
    <scope>NUCLEOTIDE SEQUENCE [LARGE SCALE GENOMIC DNA]</scope>
    <source>
        <strain>C57BL/6J</strain>
    </source>
</reference>
<reference evidence="9" key="3">
    <citation type="journal article" date="2004" name="Genome Res.">
        <title>The status, quality, and expansion of the NIH full-length cDNA project: the Mammalian Gene Collection (MGC).</title>
        <authorList>
            <consortium name="The MGC Project Team"/>
        </authorList>
    </citation>
    <scope>NUCLEOTIDE SEQUENCE [LARGE SCALE MRNA]</scope>
</reference>
<reference evidence="8" key="4">
    <citation type="journal article" date="2001" name="Dev. Dyn.">
        <title>Embryonic expression of type XIX collagen is transient and confined to muscle cells.</title>
        <authorList>
            <person name="Sumiyoshi H."/>
            <person name="Laub F."/>
            <person name="Yoshioka H."/>
            <person name="Ramirez F."/>
        </authorList>
    </citation>
    <scope>DEVELOPMENTAL STAGE</scope>
</reference>
<reference evidence="8" key="5">
    <citation type="journal article" date="2004" name="J. Cell Biol.">
        <title>Esophageal muscle physiology and morphogenesis require assembly of a collagen XIX-rich basement membrane zone.</title>
        <authorList>
            <person name="Sumiyoshi H."/>
            <person name="Mor N."/>
            <person name="Lee S.Y."/>
            <person name="Doty S."/>
            <person name="Henderson S."/>
            <person name="Tanaka S."/>
            <person name="Yoshioka H."/>
            <person name="Rattan S."/>
            <person name="Ramirez F."/>
        </authorList>
    </citation>
    <scope>FUNCTION</scope>
    <scope>DISRUPTION PHENOTYPE</scope>
</reference>
<dbReference type="EMBL" id="AB000636">
    <property type="protein sequence ID" value="BAA23578.1"/>
    <property type="molecule type" value="mRNA"/>
</dbReference>
<dbReference type="EMBL" id="AC116998">
    <property type="status" value="NOT_ANNOTATED_CDS"/>
    <property type="molecule type" value="Genomic_DNA"/>
</dbReference>
<dbReference type="EMBL" id="AC130201">
    <property type="status" value="NOT_ANNOTATED_CDS"/>
    <property type="molecule type" value="Genomic_DNA"/>
</dbReference>
<dbReference type="EMBL" id="AC161879">
    <property type="status" value="NOT_ANNOTATED_CDS"/>
    <property type="molecule type" value="Genomic_DNA"/>
</dbReference>
<dbReference type="EMBL" id="BC118970">
    <property type="protein sequence ID" value="AAI18971.1"/>
    <property type="molecule type" value="mRNA"/>
</dbReference>
<dbReference type="CCDS" id="CCDS14854.1"/>
<dbReference type="RefSeq" id="NP_031759.2">
    <property type="nucleotide sequence ID" value="NM_007733.2"/>
</dbReference>
<dbReference type="RefSeq" id="XP_006495708.1">
    <property type="nucleotide sequence ID" value="XM_006495645.5"/>
</dbReference>
<dbReference type="ComplexPortal" id="CPX-3002">
    <property type="entry name" value="Collagen type XIX trimer"/>
</dbReference>
<dbReference type="FunCoup" id="Q0VF58">
    <property type="interactions" value="231"/>
</dbReference>
<dbReference type="STRING" id="10090.ENSMUSP00000110899"/>
<dbReference type="GlyCosmos" id="Q0VF58">
    <property type="glycosylation" value="1 site, No reported glycans"/>
</dbReference>
<dbReference type="GlyGen" id="Q0VF58">
    <property type="glycosylation" value="6 sites"/>
</dbReference>
<dbReference type="iPTMnet" id="Q0VF58"/>
<dbReference type="PhosphoSitePlus" id="Q0VF58"/>
<dbReference type="PaxDb" id="10090-ENSMUSP00000110899"/>
<dbReference type="ProteomicsDB" id="283490"/>
<dbReference type="Antibodypedia" id="31201">
    <property type="antibodies" value="199 antibodies from 27 providers"/>
</dbReference>
<dbReference type="DNASU" id="12823"/>
<dbReference type="Ensembl" id="ENSMUST00000115244.9">
    <property type="protein sequence ID" value="ENSMUSP00000110899.3"/>
    <property type="gene ID" value="ENSMUSG00000026141.14"/>
</dbReference>
<dbReference type="GeneID" id="12823"/>
<dbReference type="KEGG" id="mmu:12823"/>
<dbReference type="UCSC" id="uc007amq.1">
    <property type="organism name" value="mouse"/>
</dbReference>
<dbReference type="AGR" id="MGI:1095415"/>
<dbReference type="CTD" id="1310"/>
<dbReference type="MGI" id="MGI:1095415">
    <property type="gene designation" value="Col19a1"/>
</dbReference>
<dbReference type="VEuPathDB" id="HostDB:ENSMUSG00000026141"/>
<dbReference type="eggNOG" id="KOG3544">
    <property type="taxonomic scope" value="Eukaryota"/>
</dbReference>
<dbReference type="GeneTree" id="ENSGT00940000158276"/>
<dbReference type="HOGENOM" id="CLU_282267_0_0_1"/>
<dbReference type="InParanoid" id="Q0VF58"/>
<dbReference type="OMA" id="FMFQATE"/>
<dbReference type="OrthoDB" id="5983381at2759"/>
<dbReference type="PhylomeDB" id="Q0VF58"/>
<dbReference type="TreeFam" id="TF351778"/>
<dbReference type="Reactome" id="R-MMU-1442490">
    <property type="pathway name" value="Collagen degradation"/>
</dbReference>
<dbReference type="Reactome" id="R-MMU-1650814">
    <property type="pathway name" value="Collagen biosynthesis and modifying enzymes"/>
</dbReference>
<dbReference type="Reactome" id="R-MMU-8948216">
    <property type="pathway name" value="Collagen chain trimerization"/>
</dbReference>
<dbReference type="BioGRID-ORCS" id="12823">
    <property type="hits" value="2 hits in 77 CRISPR screens"/>
</dbReference>
<dbReference type="ChiTaRS" id="Col19a1">
    <property type="organism name" value="mouse"/>
</dbReference>
<dbReference type="PRO" id="PR:Q0VF58"/>
<dbReference type="Proteomes" id="UP000000589">
    <property type="component" value="Chromosome 1"/>
</dbReference>
<dbReference type="RNAct" id="Q0VF58">
    <property type="molecule type" value="protein"/>
</dbReference>
<dbReference type="Bgee" id="ENSMUSG00000026141">
    <property type="expression patterns" value="Expressed in head bone and 131 other cell types or tissues"/>
</dbReference>
<dbReference type="ExpressionAtlas" id="Q0VF58">
    <property type="expression patterns" value="baseline and differential"/>
</dbReference>
<dbReference type="GO" id="GO:0005581">
    <property type="term" value="C:collagen trimer"/>
    <property type="evidence" value="ECO:0007669"/>
    <property type="project" value="UniProtKB-KW"/>
</dbReference>
<dbReference type="GO" id="GO:0005576">
    <property type="term" value="C:extracellular region"/>
    <property type="evidence" value="ECO:0007669"/>
    <property type="project" value="UniProtKB-KW"/>
</dbReference>
<dbReference type="GO" id="GO:0007155">
    <property type="term" value="P:cell adhesion"/>
    <property type="evidence" value="ECO:0007669"/>
    <property type="project" value="UniProtKB-KW"/>
</dbReference>
<dbReference type="GO" id="GO:0030154">
    <property type="term" value="P:cell differentiation"/>
    <property type="evidence" value="ECO:0007669"/>
    <property type="project" value="UniProtKB-KW"/>
</dbReference>
<dbReference type="GO" id="GO:0030198">
    <property type="term" value="P:extracellular matrix organization"/>
    <property type="evidence" value="ECO:0000315"/>
    <property type="project" value="MGI"/>
</dbReference>
<dbReference type="GO" id="GO:0007519">
    <property type="term" value="P:skeletal muscle tissue development"/>
    <property type="evidence" value="ECO:0000315"/>
    <property type="project" value="MGI"/>
</dbReference>
<dbReference type="FunFam" id="2.60.120.200:FF:000148">
    <property type="entry name" value="Collagen, type XIX, alpha 1"/>
    <property type="match status" value="1"/>
</dbReference>
<dbReference type="Gene3D" id="2.60.120.200">
    <property type="match status" value="1"/>
</dbReference>
<dbReference type="Gene3D" id="1.20.5.320">
    <property type="entry name" value="6-Phosphogluconate Dehydrogenase, domain 3"/>
    <property type="match status" value="1"/>
</dbReference>
<dbReference type="InterPro" id="IPR008160">
    <property type="entry name" value="Collagen"/>
</dbReference>
<dbReference type="InterPro" id="IPR050149">
    <property type="entry name" value="Collagen_superfamily"/>
</dbReference>
<dbReference type="InterPro" id="IPR013320">
    <property type="entry name" value="ConA-like_dom_sf"/>
</dbReference>
<dbReference type="InterPro" id="IPR048287">
    <property type="entry name" value="TSPN-like_N"/>
</dbReference>
<dbReference type="PANTHER" id="PTHR24023">
    <property type="entry name" value="COLLAGEN ALPHA"/>
    <property type="match status" value="1"/>
</dbReference>
<dbReference type="PANTHER" id="PTHR24023:SF1082">
    <property type="entry name" value="COLLAGEN TRIPLE HELIX REPEAT"/>
    <property type="match status" value="1"/>
</dbReference>
<dbReference type="Pfam" id="PF01391">
    <property type="entry name" value="Collagen"/>
    <property type="match status" value="11"/>
</dbReference>
<dbReference type="SMART" id="SM00210">
    <property type="entry name" value="TSPN"/>
    <property type="match status" value="1"/>
</dbReference>
<dbReference type="SUPFAM" id="SSF49899">
    <property type="entry name" value="Concanavalin A-like lectins/glucanases"/>
    <property type="match status" value="1"/>
</dbReference>
<protein>
    <recommendedName>
        <fullName>Collagen alpha-1(XIX) chain</fullName>
    </recommendedName>
    <alternativeName>
        <fullName>Collagen alpha-1(Y) chain</fullName>
    </alternativeName>
</protein>
<evidence type="ECO:0000250" key="1"/>
<evidence type="ECO:0000250" key="2">
    <source>
        <dbReference type="UniProtKB" id="Q14993"/>
    </source>
</evidence>
<evidence type="ECO:0000255" key="3"/>
<evidence type="ECO:0000256" key="4">
    <source>
        <dbReference type="SAM" id="MobiDB-lite"/>
    </source>
</evidence>
<evidence type="ECO:0000269" key="5">
    <source>
    </source>
</evidence>
<evidence type="ECO:0000269" key="6">
    <source>
    </source>
</evidence>
<evidence type="ECO:0000269" key="7">
    <source>
    </source>
</evidence>
<evidence type="ECO:0000305" key="8"/>
<evidence type="ECO:0000312" key="9">
    <source>
        <dbReference type="EMBL" id="AAI18971.1"/>
    </source>
</evidence>
<evidence type="ECO:0000312" key="10">
    <source>
        <dbReference type="EMBL" id="BAA23578.1"/>
    </source>
</evidence>
<evidence type="ECO:0000312" key="11">
    <source>
        <dbReference type="MGI" id="MGI:1095415"/>
    </source>
</evidence>
<accession>Q0VF58</accession>
<accession>O35053</accession>